<sequence length="232" mass="24725">MASRKPNPDQLGLLLSQEPAAKRARRILCGVDEAGRGPLAGPVTAAAVVLNPRKPIKGLADSKILTARKREALYDEIVEKALAWHVAEATVEEIDRINILHATMLAMQRAVQGVAALGTLPDLVQVDGNRCPQVAFAVEAIVKGDALVPAISAASILAKVTRDRQLAALHIEFPLYGFDVHAGYGTPQHLAAIDLHGVTPHHRRSFAPVRRALEGMSAISIETVAAGSAWDD</sequence>
<gene>
    <name evidence="1" type="primary">rnhB</name>
    <name type="ordered locus">Rpic_1292</name>
</gene>
<comment type="function">
    <text evidence="1">Endonuclease that specifically degrades the RNA of RNA-DNA hybrids.</text>
</comment>
<comment type="catalytic activity">
    <reaction evidence="1">
        <text>Endonucleolytic cleavage to 5'-phosphomonoester.</text>
        <dbReference type="EC" id="3.1.26.4"/>
    </reaction>
</comment>
<comment type="cofactor">
    <cofactor evidence="1">
        <name>Mn(2+)</name>
        <dbReference type="ChEBI" id="CHEBI:29035"/>
    </cofactor>
    <cofactor evidence="1">
        <name>Mg(2+)</name>
        <dbReference type="ChEBI" id="CHEBI:18420"/>
    </cofactor>
    <text evidence="1">Manganese or magnesium. Binds 1 divalent metal ion per monomer in the absence of substrate. May bind a second metal ion after substrate binding.</text>
</comment>
<comment type="subcellular location">
    <subcellularLocation>
        <location evidence="1">Cytoplasm</location>
    </subcellularLocation>
</comment>
<comment type="similarity">
    <text evidence="1">Belongs to the RNase HII family.</text>
</comment>
<keyword id="KW-0963">Cytoplasm</keyword>
<keyword id="KW-0255">Endonuclease</keyword>
<keyword id="KW-0378">Hydrolase</keyword>
<keyword id="KW-0464">Manganese</keyword>
<keyword id="KW-0479">Metal-binding</keyword>
<keyword id="KW-0540">Nuclease</keyword>
<accession>B2UBB5</accession>
<dbReference type="EC" id="3.1.26.4" evidence="1"/>
<dbReference type="EMBL" id="CP001068">
    <property type="protein sequence ID" value="ACD26436.1"/>
    <property type="molecule type" value="Genomic_DNA"/>
</dbReference>
<dbReference type="SMR" id="B2UBB5"/>
<dbReference type="STRING" id="402626.Rpic_1292"/>
<dbReference type="KEGG" id="rpi:Rpic_1292"/>
<dbReference type="eggNOG" id="COG0164">
    <property type="taxonomic scope" value="Bacteria"/>
</dbReference>
<dbReference type="HOGENOM" id="CLU_036532_3_2_4"/>
<dbReference type="GO" id="GO:0005737">
    <property type="term" value="C:cytoplasm"/>
    <property type="evidence" value="ECO:0007669"/>
    <property type="project" value="UniProtKB-SubCell"/>
</dbReference>
<dbReference type="GO" id="GO:0032299">
    <property type="term" value="C:ribonuclease H2 complex"/>
    <property type="evidence" value="ECO:0007669"/>
    <property type="project" value="TreeGrafter"/>
</dbReference>
<dbReference type="GO" id="GO:0030145">
    <property type="term" value="F:manganese ion binding"/>
    <property type="evidence" value="ECO:0007669"/>
    <property type="project" value="UniProtKB-UniRule"/>
</dbReference>
<dbReference type="GO" id="GO:0003723">
    <property type="term" value="F:RNA binding"/>
    <property type="evidence" value="ECO:0007669"/>
    <property type="project" value="InterPro"/>
</dbReference>
<dbReference type="GO" id="GO:0004523">
    <property type="term" value="F:RNA-DNA hybrid ribonuclease activity"/>
    <property type="evidence" value="ECO:0007669"/>
    <property type="project" value="UniProtKB-UniRule"/>
</dbReference>
<dbReference type="GO" id="GO:0043137">
    <property type="term" value="P:DNA replication, removal of RNA primer"/>
    <property type="evidence" value="ECO:0007669"/>
    <property type="project" value="TreeGrafter"/>
</dbReference>
<dbReference type="GO" id="GO:0006298">
    <property type="term" value="P:mismatch repair"/>
    <property type="evidence" value="ECO:0007669"/>
    <property type="project" value="TreeGrafter"/>
</dbReference>
<dbReference type="CDD" id="cd07182">
    <property type="entry name" value="RNase_HII_bacteria_HII_like"/>
    <property type="match status" value="1"/>
</dbReference>
<dbReference type="FunFam" id="3.30.420.10:FF:000006">
    <property type="entry name" value="Ribonuclease HII"/>
    <property type="match status" value="1"/>
</dbReference>
<dbReference type="Gene3D" id="3.30.420.10">
    <property type="entry name" value="Ribonuclease H-like superfamily/Ribonuclease H"/>
    <property type="match status" value="1"/>
</dbReference>
<dbReference type="HAMAP" id="MF_00052_B">
    <property type="entry name" value="RNase_HII_B"/>
    <property type="match status" value="1"/>
</dbReference>
<dbReference type="InterPro" id="IPR022898">
    <property type="entry name" value="RNase_HII"/>
</dbReference>
<dbReference type="InterPro" id="IPR001352">
    <property type="entry name" value="RNase_HII/HIII"/>
</dbReference>
<dbReference type="InterPro" id="IPR024567">
    <property type="entry name" value="RNase_HII/HIII_dom"/>
</dbReference>
<dbReference type="InterPro" id="IPR012337">
    <property type="entry name" value="RNaseH-like_sf"/>
</dbReference>
<dbReference type="InterPro" id="IPR036397">
    <property type="entry name" value="RNaseH_sf"/>
</dbReference>
<dbReference type="NCBIfam" id="NF000595">
    <property type="entry name" value="PRK00015.1-3"/>
    <property type="match status" value="1"/>
</dbReference>
<dbReference type="NCBIfam" id="NF000596">
    <property type="entry name" value="PRK00015.1-4"/>
    <property type="match status" value="1"/>
</dbReference>
<dbReference type="PANTHER" id="PTHR10954">
    <property type="entry name" value="RIBONUCLEASE H2 SUBUNIT A"/>
    <property type="match status" value="1"/>
</dbReference>
<dbReference type="PANTHER" id="PTHR10954:SF18">
    <property type="entry name" value="RIBONUCLEASE HII"/>
    <property type="match status" value="1"/>
</dbReference>
<dbReference type="Pfam" id="PF01351">
    <property type="entry name" value="RNase_HII"/>
    <property type="match status" value="1"/>
</dbReference>
<dbReference type="SUPFAM" id="SSF53098">
    <property type="entry name" value="Ribonuclease H-like"/>
    <property type="match status" value="1"/>
</dbReference>
<dbReference type="PROSITE" id="PS51975">
    <property type="entry name" value="RNASE_H_2"/>
    <property type="match status" value="1"/>
</dbReference>
<feature type="chain" id="PRO_1000091644" description="Ribonuclease HII">
    <location>
        <begin position="1"/>
        <end position="232"/>
    </location>
</feature>
<feature type="domain" description="RNase H type-2" evidence="2">
    <location>
        <begin position="26"/>
        <end position="218"/>
    </location>
</feature>
<feature type="binding site" evidence="1">
    <location>
        <position position="32"/>
    </location>
    <ligand>
        <name>a divalent metal cation</name>
        <dbReference type="ChEBI" id="CHEBI:60240"/>
    </ligand>
</feature>
<feature type="binding site" evidence="1">
    <location>
        <position position="33"/>
    </location>
    <ligand>
        <name>a divalent metal cation</name>
        <dbReference type="ChEBI" id="CHEBI:60240"/>
    </ligand>
</feature>
<feature type="binding site" evidence="1">
    <location>
        <position position="127"/>
    </location>
    <ligand>
        <name>a divalent metal cation</name>
        <dbReference type="ChEBI" id="CHEBI:60240"/>
    </ligand>
</feature>
<protein>
    <recommendedName>
        <fullName evidence="1">Ribonuclease HII</fullName>
        <shortName evidence="1">RNase HII</shortName>
        <ecNumber evidence="1">3.1.26.4</ecNumber>
    </recommendedName>
</protein>
<proteinExistence type="inferred from homology"/>
<name>RNH2_RALPJ</name>
<reference key="1">
    <citation type="submission" date="2008-05" db="EMBL/GenBank/DDBJ databases">
        <title>Complete sequence of chromosome 1 of Ralstonia pickettii 12J.</title>
        <authorList>
            <person name="Lucas S."/>
            <person name="Copeland A."/>
            <person name="Lapidus A."/>
            <person name="Glavina del Rio T."/>
            <person name="Dalin E."/>
            <person name="Tice H."/>
            <person name="Bruce D."/>
            <person name="Goodwin L."/>
            <person name="Pitluck S."/>
            <person name="Meincke L."/>
            <person name="Brettin T."/>
            <person name="Detter J.C."/>
            <person name="Han C."/>
            <person name="Kuske C.R."/>
            <person name="Schmutz J."/>
            <person name="Larimer F."/>
            <person name="Land M."/>
            <person name="Hauser L."/>
            <person name="Kyrpides N."/>
            <person name="Mikhailova N."/>
            <person name="Marsh T."/>
            <person name="Richardson P."/>
        </authorList>
    </citation>
    <scope>NUCLEOTIDE SEQUENCE [LARGE SCALE GENOMIC DNA]</scope>
    <source>
        <strain>12J</strain>
    </source>
</reference>
<evidence type="ECO:0000255" key="1">
    <source>
        <dbReference type="HAMAP-Rule" id="MF_00052"/>
    </source>
</evidence>
<evidence type="ECO:0000255" key="2">
    <source>
        <dbReference type="PROSITE-ProRule" id="PRU01319"/>
    </source>
</evidence>
<organism>
    <name type="scientific">Ralstonia pickettii (strain 12J)</name>
    <dbReference type="NCBI Taxonomy" id="402626"/>
    <lineage>
        <taxon>Bacteria</taxon>
        <taxon>Pseudomonadati</taxon>
        <taxon>Pseudomonadota</taxon>
        <taxon>Betaproteobacteria</taxon>
        <taxon>Burkholderiales</taxon>
        <taxon>Burkholderiaceae</taxon>
        <taxon>Ralstonia</taxon>
    </lineage>
</organism>